<comment type="similarity">
    <text evidence="2">Belongs to the ABC transporter superfamily.</text>
</comment>
<feature type="chain" id="PRO_0000093209" description="Uncharacterized ABC transporter ATP-binding protein HI_1618">
    <location>
        <begin position="1"/>
        <end position="217"/>
    </location>
</feature>
<feature type="domain" description="ABC transporter" evidence="1">
    <location>
        <begin position="14"/>
        <end position="217"/>
    </location>
</feature>
<feature type="binding site" evidence="1">
    <location>
        <begin position="46"/>
        <end position="53"/>
    </location>
    <ligand>
        <name>ATP</name>
        <dbReference type="ChEBI" id="CHEBI:30616"/>
    </ligand>
</feature>
<proteinExistence type="inferred from homology"/>
<accession>P45275</accession>
<sequence>MVFSSAKREKNNMLAVNNLCIERNGRAIIQDLSFTLEGQKRLFVQGEIGSGKTTLLLALLGFVPVTKGEIKLFGKVCRKEKDFAPFRGTIGICFQNADDQLFGPTVLDDIAFGPLNQNVPREQAYHIAEQQLERLGITRLKDRMVHTLSGGEKNFTALAGVLAMQPKILLLDEPTNGLDRKNTEKLTALLRELSLPILISSHHHGFINELATEIISL</sequence>
<evidence type="ECO:0000255" key="1">
    <source>
        <dbReference type="PROSITE-ProRule" id="PRU00434"/>
    </source>
</evidence>
<evidence type="ECO:0000305" key="2"/>
<reference key="1">
    <citation type="journal article" date="1995" name="Science">
        <title>Whole-genome random sequencing and assembly of Haemophilus influenzae Rd.</title>
        <authorList>
            <person name="Fleischmann R.D."/>
            <person name="Adams M.D."/>
            <person name="White O."/>
            <person name="Clayton R.A."/>
            <person name="Kirkness E.F."/>
            <person name="Kerlavage A.R."/>
            <person name="Bult C.J."/>
            <person name="Tomb J.-F."/>
            <person name="Dougherty B.A."/>
            <person name="Merrick J.M."/>
            <person name="McKenney K."/>
            <person name="Sutton G.G."/>
            <person name="FitzHugh W."/>
            <person name="Fields C.A."/>
            <person name="Gocayne J.D."/>
            <person name="Scott J.D."/>
            <person name="Shirley R."/>
            <person name="Liu L.-I."/>
            <person name="Glodek A."/>
            <person name="Kelley J.M."/>
            <person name="Weidman J.F."/>
            <person name="Phillips C.A."/>
            <person name="Spriggs T."/>
            <person name="Hedblom E."/>
            <person name="Cotton M.D."/>
            <person name="Utterback T.R."/>
            <person name="Hanna M.C."/>
            <person name="Nguyen D.T."/>
            <person name="Saudek D.M."/>
            <person name="Brandon R.C."/>
            <person name="Fine L.D."/>
            <person name="Fritchman J.L."/>
            <person name="Fuhrmann J.L."/>
            <person name="Geoghagen N.S.M."/>
            <person name="Gnehm C.L."/>
            <person name="McDonald L.A."/>
            <person name="Small K.V."/>
            <person name="Fraser C.M."/>
            <person name="Smith H.O."/>
            <person name="Venter J.C."/>
        </authorList>
    </citation>
    <scope>NUCLEOTIDE SEQUENCE [LARGE SCALE GENOMIC DNA]</scope>
    <source>
        <strain>ATCC 51907 / DSM 11121 / KW20 / Rd</strain>
    </source>
</reference>
<gene>
    <name type="ordered locus">HI_1618</name>
</gene>
<protein>
    <recommendedName>
        <fullName>Uncharacterized ABC transporter ATP-binding protein HI_1618</fullName>
    </recommendedName>
</protein>
<organism>
    <name type="scientific">Haemophilus influenzae (strain ATCC 51907 / DSM 11121 / KW20 / Rd)</name>
    <dbReference type="NCBI Taxonomy" id="71421"/>
    <lineage>
        <taxon>Bacteria</taxon>
        <taxon>Pseudomonadati</taxon>
        <taxon>Pseudomonadota</taxon>
        <taxon>Gammaproteobacteria</taxon>
        <taxon>Pasteurellales</taxon>
        <taxon>Pasteurellaceae</taxon>
        <taxon>Haemophilus</taxon>
    </lineage>
</organism>
<name>Y1618_HAEIN</name>
<keyword id="KW-0067">ATP-binding</keyword>
<keyword id="KW-0547">Nucleotide-binding</keyword>
<keyword id="KW-1185">Reference proteome</keyword>
<keyword id="KW-0813">Transport</keyword>
<dbReference type="EMBL" id="L42023">
    <property type="protein sequence ID" value="AAC23266.1"/>
    <property type="molecule type" value="Genomic_DNA"/>
</dbReference>
<dbReference type="PIR" id="A64133">
    <property type="entry name" value="A64133"/>
</dbReference>
<dbReference type="RefSeq" id="NP_439760.2">
    <property type="nucleotide sequence ID" value="NC_000907.1"/>
</dbReference>
<dbReference type="SMR" id="P45275"/>
<dbReference type="STRING" id="71421.HI_1618"/>
<dbReference type="EnsemblBacteria" id="AAC23266">
    <property type="protein sequence ID" value="AAC23266"/>
    <property type="gene ID" value="HI_1618"/>
</dbReference>
<dbReference type="KEGG" id="hin:HI_1618"/>
<dbReference type="PATRIC" id="fig|71421.8.peg.1693"/>
<dbReference type="eggNOG" id="COG1122">
    <property type="taxonomic scope" value="Bacteria"/>
</dbReference>
<dbReference type="HOGENOM" id="CLU_000604_1_22_6"/>
<dbReference type="OrthoDB" id="5292475at2"/>
<dbReference type="PhylomeDB" id="P45275"/>
<dbReference type="Proteomes" id="UP000000579">
    <property type="component" value="Chromosome"/>
</dbReference>
<dbReference type="GO" id="GO:0043190">
    <property type="term" value="C:ATP-binding cassette (ABC) transporter complex"/>
    <property type="evidence" value="ECO:0000318"/>
    <property type="project" value="GO_Central"/>
</dbReference>
<dbReference type="GO" id="GO:0005524">
    <property type="term" value="F:ATP binding"/>
    <property type="evidence" value="ECO:0000318"/>
    <property type="project" value="GO_Central"/>
</dbReference>
<dbReference type="GO" id="GO:0016887">
    <property type="term" value="F:ATP hydrolysis activity"/>
    <property type="evidence" value="ECO:0007669"/>
    <property type="project" value="InterPro"/>
</dbReference>
<dbReference type="GO" id="GO:0042626">
    <property type="term" value="F:ATPase-coupled transmembrane transporter activity"/>
    <property type="evidence" value="ECO:0000318"/>
    <property type="project" value="GO_Central"/>
</dbReference>
<dbReference type="CDD" id="cd03225">
    <property type="entry name" value="ABC_cobalt_CbiO_domain1"/>
    <property type="match status" value="1"/>
</dbReference>
<dbReference type="FunFam" id="3.40.50.300:FF:005187">
    <property type="entry name" value="Uncharacterized ABC transporter ATP-binding protein HI_1618"/>
    <property type="match status" value="1"/>
</dbReference>
<dbReference type="Gene3D" id="3.40.50.300">
    <property type="entry name" value="P-loop containing nucleotide triphosphate hydrolases"/>
    <property type="match status" value="1"/>
</dbReference>
<dbReference type="InterPro" id="IPR003593">
    <property type="entry name" value="AAA+_ATPase"/>
</dbReference>
<dbReference type="InterPro" id="IPR003439">
    <property type="entry name" value="ABC_transporter-like_ATP-bd"/>
</dbReference>
<dbReference type="InterPro" id="IPR015856">
    <property type="entry name" value="ABC_transpr_CbiO/EcfA_su"/>
</dbReference>
<dbReference type="InterPro" id="IPR050095">
    <property type="entry name" value="ECF_ABC_transporter_ATP-bd"/>
</dbReference>
<dbReference type="InterPro" id="IPR027417">
    <property type="entry name" value="P-loop_NTPase"/>
</dbReference>
<dbReference type="PANTHER" id="PTHR43553:SF24">
    <property type="entry name" value="ENERGY-COUPLING FACTOR TRANSPORTER ATP-BINDING PROTEIN ECFA1"/>
    <property type="match status" value="1"/>
</dbReference>
<dbReference type="PANTHER" id="PTHR43553">
    <property type="entry name" value="HEAVY METAL TRANSPORTER"/>
    <property type="match status" value="1"/>
</dbReference>
<dbReference type="Pfam" id="PF00005">
    <property type="entry name" value="ABC_tran"/>
    <property type="match status" value="1"/>
</dbReference>
<dbReference type="SMART" id="SM00382">
    <property type="entry name" value="AAA"/>
    <property type="match status" value="1"/>
</dbReference>
<dbReference type="SUPFAM" id="SSF52540">
    <property type="entry name" value="P-loop containing nucleoside triphosphate hydrolases"/>
    <property type="match status" value="1"/>
</dbReference>
<dbReference type="PROSITE" id="PS50893">
    <property type="entry name" value="ABC_TRANSPORTER_2"/>
    <property type="match status" value="1"/>
</dbReference>